<reference key="1">
    <citation type="journal article" date="2009" name="Toxicon">
        <title>C-type lectin protein isoforms of Macrovipera lebetina: cDNA cloning and genetic diversity.</title>
        <authorList>
            <person name="Jebali J."/>
            <person name="Bazaa A."/>
            <person name="Sarray S."/>
            <person name="Benhaj K."/>
            <person name="Karboul A."/>
            <person name="El Ayeb M."/>
            <person name="Marrakchi N."/>
            <person name="Gargouri A."/>
        </authorList>
    </citation>
    <scope>NUCLEOTIDE SEQUENCE [MRNA]</scope>
</reference>
<organism>
    <name type="scientific">Macrovipera lebetinus</name>
    <name type="common">Levantine viper</name>
    <name type="synonym">Vipera lebetina</name>
    <dbReference type="NCBI Taxonomy" id="3148341"/>
    <lineage>
        <taxon>Eukaryota</taxon>
        <taxon>Metazoa</taxon>
        <taxon>Chordata</taxon>
        <taxon>Craniata</taxon>
        <taxon>Vertebrata</taxon>
        <taxon>Euteleostomi</taxon>
        <taxon>Lepidosauria</taxon>
        <taxon>Squamata</taxon>
        <taxon>Bifurcata</taxon>
        <taxon>Unidentata</taxon>
        <taxon>Episquamata</taxon>
        <taxon>Toxicofera</taxon>
        <taxon>Serpentes</taxon>
        <taxon>Colubroidea</taxon>
        <taxon>Viperidae</taxon>
        <taxon>Viperinae</taxon>
        <taxon>Macrovipera</taxon>
    </lineage>
</organism>
<dbReference type="EMBL" id="EU085460">
    <property type="protein sequence ID" value="ABW82670.1"/>
    <property type="molecule type" value="mRNA"/>
</dbReference>
<dbReference type="SMR" id="B4XSZ8"/>
<dbReference type="GO" id="GO:0005576">
    <property type="term" value="C:extracellular region"/>
    <property type="evidence" value="ECO:0007669"/>
    <property type="project" value="UniProtKB-SubCell"/>
</dbReference>
<dbReference type="GO" id="GO:0090729">
    <property type="term" value="F:toxin activity"/>
    <property type="evidence" value="ECO:0007669"/>
    <property type="project" value="UniProtKB-KW"/>
</dbReference>
<dbReference type="FunFam" id="3.10.100.10:FF:000087">
    <property type="entry name" value="Snaclec rhodocetin subunit delta"/>
    <property type="match status" value="1"/>
</dbReference>
<dbReference type="Gene3D" id="3.10.100.10">
    <property type="entry name" value="Mannose-Binding Protein A, subunit A"/>
    <property type="match status" value="1"/>
</dbReference>
<dbReference type="InterPro" id="IPR001304">
    <property type="entry name" value="C-type_lectin-like"/>
</dbReference>
<dbReference type="InterPro" id="IPR016186">
    <property type="entry name" value="C-type_lectin-like/link_sf"/>
</dbReference>
<dbReference type="InterPro" id="IPR050111">
    <property type="entry name" value="C-type_lectin/snaclec_domain"/>
</dbReference>
<dbReference type="InterPro" id="IPR018378">
    <property type="entry name" value="C-type_lectin_CS"/>
</dbReference>
<dbReference type="InterPro" id="IPR016187">
    <property type="entry name" value="CTDL_fold"/>
</dbReference>
<dbReference type="PANTHER" id="PTHR22803">
    <property type="entry name" value="MANNOSE, PHOSPHOLIPASE, LECTIN RECEPTOR RELATED"/>
    <property type="match status" value="1"/>
</dbReference>
<dbReference type="Pfam" id="PF00059">
    <property type="entry name" value="Lectin_C"/>
    <property type="match status" value="1"/>
</dbReference>
<dbReference type="SMART" id="SM00034">
    <property type="entry name" value="CLECT"/>
    <property type="match status" value="1"/>
</dbReference>
<dbReference type="SUPFAM" id="SSF56436">
    <property type="entry name" value="C-type lectin-like"/>
    <property type="match status" value="1"/>
</dbReference>
<dbReference type="PROSITE" id="PS00615">
    <property type="entry name" value="C_TYPE_LECTIN_1"/>
    <property type="match status" value="1"/>
</dbReference>
<dbReference type="PROSITE" id="PS50041">
    <property type="entry name" value="C_TYPE_LECTIN_2"/>
    <property type="match status" value="1"/>
</dbReference>
<sequence>DCLPGWSSHEGHCYKVFNLAKTWEDAEKFCTEQANSGHLVSIDSKKEANFVAELVSQNIKETRRTDFVWIGLRVEDKRQHCSSEWSDGSSINYQNWIEAESKKCLGLEKQTRYRKWVNLNCGQPYRFTCEI</sequence>
<name>SLA8_MACLB</name>
<evidence type="ECO:0000250" key="1"/>
<evidence type="ECO:0000255" key="2">
    <source>
        <dbReference type="PROSITE-ProRule" id="PRU00040"/>
    </source>
</evidence>
<evidence type="ECO:0000305" key="3"/>
<comment type="function">
    <text evidence="1">Interferes with one step of hemostasis (modulation of platelet aggregation, or coagulation cascade, for example).</text>
</comment>
<comment type="subunit">
    <text evidence="1">Heterodimer; disulfide-linked.</text>
</comment>
<comment type="subcellular location">
    <subcellularLocation>
        <location evidence="1">Secreted</location>
    </subcellularLocation>
</comment>
<comment type="tissue specificity">
    <text>Expressed by the venom gland.</text>
</comment>
<comment type="miscellaneous">
    <text>Shows greater sequence similarity to the alpha than beta subunits compared to other heterodimer snaclecs.</text>
</comment>
<comment type="similarity">
    <text evidence="3">Belongs to the snaclec family.</text>
</comment>
<accession>B4XSZ8</accession>
<feature type="chain" id="PRO_0000356324" description="Snaclec A8">
    <location>
        <begin position="1" status="less than"/>
        <end position="131"/>
    </location>
</feature>
<feature type="domain" description="C-type lectin" evidence="2">
    <location>
        <begin position="9"/>
        <end position="130"/>
    </location>
</feature>
<feature type="disulfide bond" evidence="2">
    <location>
        <begin position="2"/>
        <end position="13"/>
    </location>
</feature>
<feature type="disulfide bond" evidence="2">
    <location>
        <begin position="30"/>
        <end position="129"/>
    </location>
</feature>
<feature type="disulfide bond" description="Interchain" evidence="2">
    <location>
        <position position="81"/>
    </location>
</feature>
<feature type="disulfide bond" evidence="2">
    <location>
        <begin position="104"/>
        <end position="121"/>
    </location>
</feature>
<feature type="non-terminal residue">
    <location>
        <position position="1"/>
    </location>
</feature>
<keyword id="KW-1015">Disulfide bond</keyword>
<keyword id="KW-1199">Hemostasis impairing toxin</keyword>
<keyword id="KW-0964">Secreted</keyword>
<keyword id="KW-0800">Toxin</keyword>
<protein>
    <recommendedName>
        <fullName>Snaclec A8</fullName>
    </recommendedName>
    <alternativeName>
        <fullName>C-type lectin A8</fullName>
    </alternativeName>
</protein>
<proteinExistence type="evidence at transcript level"/>